<keyword id="KW-0067">ATP-binding</keyword>
<keyword id="KW-0169">Cobalamin biosynthesis</keyword>
<keyword id="KW-0315">Glutamine amidotransferase</keyword>
<keyword id="KW-0436">Ligase</keyword>
<keyword id="KW-0460">Magnesium</keyword>
<keyword id="KW-0547">Nucleotide-binding</keyword>
<keyword id="KW-1185">Reference proteome</keyword>
<protein>
    <recommendedName>
        <fullName evidence="1">Cobyrinate a,c-diamide synthase</fullName>
        <ecNumber evidence="1">6.3.5.11</ecNumber>
    </recommendedName>
    <alternativeName>
        <fullName evidence="1">Cobyrinic acid a,c-diamide synthetase</fullName>
    </alternativeName>
</protein>
<reference key="1">
    <citation type="journal article" date="2001" name="Science">
        <title>Comparative genomics of Listeria species.</title>
        <authorList>
            <person name="Glaser P."/>
            <person name="Frangeul L."/>
            <person name="Buchrieser C."/>
            <person name="Rusniok C."/>
            <person name="Amend A."/>
            <person name="Baquero F."/>
            <person name="Berche P."/>
            <person name="Bloecker H."/>
            <person name="Brandt P."/>
            <person name="Chakraborty T."/>
            <person name="Charbit A."/>
            <person name="Chetouani F."/>
            <person name="Couve E."/>
            <person name="de Daruvar A."/>
            <person name="Dehoux P."/>
            <person name="Domann E."/>
            <person name="Dominguez-Bernal G."/>
            <person name="Duchaud E."/>
            <person name="Durant L."/>
            <person name="Dussurget O."/>
            <person name="Entian K.-D."/>
            <person name="Fsihi H."/>
            <person name="Garcia-del Portillo F."/>
            <person name="Garrido P."/>
            <person name="Gautier L."/>
            <person name="Goebel W."/>
            <person name="Gomez-Lopez N."/>
            <person name="Hain T."/>
            <person name="Hauf J."/>
            <person name="Jackson D."/>
            <person name="Jones L.-M."/>
            <person name="Kaerst U."/>
            <person name="Kreft J."/>
            <person name="Kuhn M."/>
            <person name="Kunst F."/>
            <person name="Kurapkat G."/>
            <person name="Madueno E."/>
            <person name="Maitournam A."/>
            <person name="Mata Vicente J."/>
            <person name="Ng E."/>
            <person name="Nedjari H."/>
            <person name="Nordsiek G."/>
            <person name="Novella S."/>
            <person name="de Pablos B."/>
            <person name="Perez-Diaz J.-C."/>
            <person name="Purcell R."/>
            <person name="Remmel B."/>
            <person name="Rose M."/>
            <person name="Schlueter T."/>
            <person name="Simoes N."/>
            <person name="Tierrez A."/>
            <person name="Vazquez-Boland J.-A."/>
            <person name="Voss H."/>
            <person name="Wehland J."/>
            <person name="Cossart P."/>
        </authorList>
    </citation>
    <scope>NUCLEOTIDE SEQUENCE [LARGE SCALE GENOMIC DNA]</scope>
    <source>
        <strain>ATCC BAA-679 / EGD-e</strain>
    </source>
</reference>
<name>CBIA_LISMO</name>
<dbReference type="EC" id="6.3.5.11" evidence="1"/>
<dbReference type="EMBL" id="AL591978">
    <property type="protein sequence ID" value="CAC99269.1"/>
    <property type="molecule type" value="Genomic_DNA"/>
</dbReference>
<dbReference type="PIR" id="AG1223">
    <property type="entry name" value="AG1223"/>
</dbReference>
<dbReference type="RefSeq" id="NP_464716.1">
    <property type="nucleotide sequence ID" value="NC_003210.1"/>
</dbReference>
<dbReference type="RefSeq" id="WP_010989704.1">
    <property type="nucleotide sequence ID" value="NZ_CP149495.1"/>
</dbReference>
<dbReference type="SMR" id="Q8Y7T0"/>
<dbReference type="STRING" id="169963.gene:17593847"/>
<dbReference type="PaxDb" id="169963-lmo1191"/>
<dbReference type="EnsemblBacteria" id="CAC99269">
    <property type="protein sequence ID" value="CAC99269"/>
    <property type="gene ID" value="CAC99269"/>
</dbReference>
<dbReference type="GeneID" id="986099"/>
<dbReference type="KEGG" id="lmo:lmo1191"/>
<dbReference type="PATRIC" id="fig|169963.11.peg.1222"/>
<dbReference type="eggNOG" id="COG1797">
    <property type="taxonomic scope" value="Bacteria"/>
</dbReference>
<dbReference type="HOGENOM" id="CLU_022752_2_0_9"/>
<dbReference type="OrthoDB" id="9764035at2"/>
<dbReference type="PhylomeDB" id="Q8Y7T0"/>
<dbReference type="BioCyc" id="LMON169963:LMO1191-MONOMER"/>
<dbReference type="UniPathway" id="UPA00148">
    <property type="reaction ID" value="UER00231"/>
</dbReference>
<dbReference type="Proteomes" id="UP000000817">
    <property type="component" value="Chromosome"/>
</dbReference>
<dbReference type="GO" id="GO:0005524">
    <property type="term" value="F:ATP binding"/>
    <property type="evidence" value="ECO:0007669"/>
    <property type="project" value="UniProtKB-UniRule"/>
</dbReference>
<dbReference type="GO" id="GO:0042242">
    <property type="term" value="F:cobyrinic acid a,c-diamide synthase activity"/>
    <property type="evidence" value="ECO:0007669"/>
    <property type="project" value="UniProtKB-UniRule"/>
</dbReference>
<dbReference type="GO" id="GO:0009236">
    <property type="term" value="P:cobalamin biosynthetic process"/>
    <property type="evidence" value="ECO:0007669"/>
    <property type="project" value="UniProtKB-UniRule"/>
</dbReference>
<dbReference type="CDD" id="cd05388">
    <property type="entry name" value="CobB_N"/>
    <property type="match status" value="1"/>
</dbReference>
<dbReference type="CDD" id="cd03130">
    <property type="entry name" value="GATase1_CobB"/>
    <property type="match status" value="1"/>
</dbReference>
<dbReference type="Gene3D" id="3.40.50.880">
    <property type="match status" value="1"/>
</dbReference>
<dbReference type="Gene3D" id="3.40.50.300">
    <property type="entry name" value="P-loop containing nucleotide triphosphate hydrolases"/>
    <property type="match status" value="2"/>
</dbReference>
<dbReference type="HAMAP" id="MF_00027">
    <property type="entry name" value="CobB_CbiA"/>
    <property type="match status" value="1"/>
</dbReference>
<dbReference type="InterPro" id="IPR004484">
    <property type="entry name" value="CbiA/CobB_synth"/>
</dbReference>
<dbReference type="InterPro" id="IPR029062">
    <property type="entry name" value="Class_I_gatase-like"/>
</dbReference>
<dbReference type="InterPro" id="IPR002586">
    <property type="entry name" value="CobQ/CobB/MinD/ParA_Nub-bd_dom"/>
</dbReference>
<dbReference type="InterPro" id="IPR011698">
    <property type="entry name" value="GATase_3"/>
</dbReference>
<dbReference type="InterPro" id="IPR027417">
    <property type="entry name" value="P-loop_NTPase"/>
</dbReference>
<dbReference type="NCBIfam" id="TIGR00379">
    <property type="entry name" value="cobB"/>
    <property type="match status" value="1"/>
</dbReference>
<dbReference type="NCBIfam" id="NF002204">
    <property type="entry name" value="PRK01077.1"/>
    <property type="match status" value="1"/>
</dbReference>
<dbReference type="PANTHER" id="PTHR43873">
    <property type="entry name" value="COBYRINATE A,C-DIAMIDE SYNTHASE"/>
    <property type="match status" value="1"/>
</dbReference>
<dbReference type="PANTHER" id="PTHR43873:SF1">
    <property type="entry name" value="COBYRINATE A,C-DIAMIDE SYNTHASE"/>
    <property type="match status" value="1"/>
</dbReference>
<dbReference type="Pfam" id="PF01656">
    <property type="entry name" value="CbiA"/>
    <property type="match status" value="1"/>
</dbReference>
<dbReference type="Pfam" id="PF07685">
    <property type="entry name" value="GATase_3"/>
    <property type="match status" value="1"/>
</dbReference>
<dbReference type="SUPFAM" id="SSF52317">
    <property type="entry name" value="Class I glutamine amidotransferase-like"/>
    <property type="match status" value="1"/>
</dbReference>
<dbReference type="SUPFAM" id="SSF52540">
    <property type="entry name" value="P-loop containing nucleoside triphosphate hydrolases"/>
    <property type="match status" value="1"/>
</dbReference>
<dbReference type="PROSITE" id="PS51274">
    <property type="entry name" value="GATASE_COBBQ"/>
    <property type="match status" value="1"/>
</dbReference>
<sequence length="452" mass="49766">MNKILIAAASSGTGKTTVTLGIMHALKKRGLRVQPFKVGPDYIDTNYHQAITGVASINLDSFLIDDDAMLAALFEKHGQSADISVIEGVMGLFDGLGIDRDNSSTSFIAKCTKTPVILVVDGKAISTSAAAIVDGFNRFDPELTIAGVIINRVASENHFSLIKGAIERYTDVPVLGYLPKNAAVALPERHLGLVPKEEMTELETKWEVLGDLIAEHVDLDRLLAISKTGAKLTVHPPEIQVPDFSGMRVAYALDAAFHFYYQDNLDFIRSTGATLIPFSPLEEREVPDADFIYIGGGFPEVFAERLAKNKSMHESILAAHEQGKPIYAECGGLMYLGSSLEMEAESYEMVGVFDGVSKMTTRLRKFGYCIAEPLEDTLLGKKGTAIRGHEFHHSVFETTEPTRMKLTKKRDGETVKEWHGGYQKGNTFASYLHIHFYQNLAMITHMFGAIER</sequence>
<comment type="function">
    <text evidence="1">Catalyzes the ATP-dependent amidation of the two carboxylate groups at positions a and c of cobyrinate, using either L-glutamine or ammonia as the nitrogen source.</text>
</comment>
<comment type="catalytic activity">
    <reaction evidence="1">
        <text>cob(II)yrinate + 2 L-glutamine + 2 ATP + 2 H2O = cob(II)yrinate a,c diamide + 2 L-glutamate + 2 ADP + 2 phosphate + 2 H(+)</text>
        <dbReference type="Rhea" id="RHEA:26289"/>
        <dbReference type="ChEBI" id="CHEBI:15377"/>
        <dbReference type="ChEBI" id="CHEBI:15378"/>
        <dbReference type="ChEBI" id="CHEBI:29985"/>
        <dbReference type="ChEBI" id="CHEBI:30616"/>
        <dbReference type="ChEBI" id="CHEBI:43474"/>
        <dbReference type="ChEBI" id="CHEBI:58359"/>
        <dbReference type="ChEBI" id="CHEBI:58537"/>
        <dbReference type="ChEBI" id="CHEBI:58894"/>
        <dbReference type="ChEBI" id="CHEBI:456216"/>
        <dbReference type="EC" id="6.3.5.11"/>
    </reaction>
</comment>
<comment type="cofactor">
    <cofactor evidence="1">
        <name>Mg(2+)</name>
        <dbReference type="ChEBI" id="CHEBI:18420"/>
    </cofactor>
</comment>
<comment type="pathway">
    <text evidence="1">Cofactor biosynthesis; adenosylcobalamin biosynthesis; cob(II)yrinate a,c-diamide from sirohydrochlorin (anaerobic route): step 10/10.</text>
</comment>
<comment type="domain">
    <text evidence="1">Comprises of two domains. The C-terminal domain contains the binding site for glutamine and catalyzes the hydrolysis of this substrate to glutamate and ammonia. The N-terminal domain is anticipated to bind ATP and cobyrinate and catalyzes the ultimate synthesis of the diamide product. The ammonia produced via the glutaminase domain is probably translocated to the adjacent domain via a molecular tunnel, where it reacts with an activated intermediate.</text>
</comment>
<comment type="miscellaneous">
    <text evidence="1">The a and c carboxylates of cobyrinate are activated for nucleophilic attack via formation of a phosphorylated intermediate by ATP. CbiA catalyzes first the amidation of the c-carboxylate, and then that of the a-carboxylate.</text>
</comment>
<comment type="similarity">
    <text evidence="1">Belongs to the CobB/CbiA family.</text>
</comment>
<accession>Q8Y7T0</accession>
<gene>
    <name evidence="1" type="primary">cbiA</name>
    <name type="ordered locus">lmo1191</name>
</gene>
<evidence type="ECO:0000255" key="1">
    <source>
        <dbReference type="HAMAP-Rule" id="MF_00027"/>
    </source>
</evidence>
<feature type="chain" id="PRO_0000141261" description="Cobyrinate a,c-diamide synthase">
    <location>
        <begin position="1"/>
        <end position="452"/>
    </location>
</feature>
<feature type="domain" description="GATase cobBQ-type" evidence="1">
    <location>
        <begin position="248"/>
        <end position="441"/>
    </location>
</feature>
<feature type="active site" description="Nucleophile" evidence="1">
    <location>
        <position position="330"/>
    </location>
</feature>
<feature type="site" description="Increases nucleophilicity of active site Cys" evidence="1">
    <location>
        <position position="433"/>
    </location>
</feature>
<proteinExistence type="inferred from homology"/>
<organism>
    <name type="scientific">Listeria monocytogenes serovar 1/2a (strain ATCC BAA-679 / EGD-e)</name>
    <dbReference type="NCBI Taxonomy" id="169963"/>
    <lineage>
        <taxon>Bacteria</taxon>
        <taxon>Bacillati</taxon>
        <taxon>Bacillota</taxon>
        <taxon>Bacilli</taxon>
        <taxon>Bacillales</taxon>
        <taxon>Listeriaceae</taxon>
        <taxon>Listeria</taxon>
    </lineage>
</organism>